<dbReference type="EC" id="3.1.3.15" evidence="1"/>
<dbReference type="EC" id="4.2.1.19" evidence="1"/>
<dbReference type="EMBL" id="BX950851">
    <property type="protein sequence ID" value="CAG75484.1"/>
    <property type="molecule type" value="Genomic_DNA"/>
</dbReference>
<dbReference type="RefSeq" id="WP_011094130.1">
    <property type="nucleotide sequence ID" value="NC_004547.2"/>
</dbReference>
<dbReference type="SMR" id="Q6D409"/>
<dbReference type="STRING" id="218491.ECA2585"/>
<dbReference type="KEGG" id="eca:ECA2585"/>
<dbReference type="PATRIC" id="fig|218491.5.peg.2619"/>
<dbReference type="eggNOG" id="COG0131">
    <property type="taxonomic scope" value="Bacteria"/>
</dbReference>
<dbReference type="eggNOG" id="COG0241">
    <property type="taxonomic scope" value="Bacteria"/>
</dbReference>
<dbReference type="HOGENOM" id="CLU_044308_0_0_6"/>
<dbReference type="OrthoDB" id="9790411at2"/>
<dbReference type="UniPathway" id="UPA00031">
    <property type="reaction ID" value="UER00011"/>
</dbReference>
<dbReference type="UniPathway" id="UPA00031">
    <property type="reaction ID" value="UER00013"/>
</dbReference>
<dbReference type="Proteomes" id="UP000007966">
    <property type="component" value="Chromosome"/>
</dbReference>
<dbReference type="GO" id="GO:0005737">
    <property type="term" value="C:cytoplasm"/>
    <property type="evidence" value="ECO:0007669"/>
    <property type="project" value="UniProtKB-SubCell"/>
</dbReference>
<dbReference type="GO" id="GO:0004401">
    <property type="term" value="F:histidinol-phosphatase activity"/>
    <property type="evidence" value="ECO:0007669"/>
    <property type="project" value="UniProtKB-UniRule"/>
</dbReference>
<dbReference type="GO" id="GO:0004424">
    <property type="term" value="F:imidazoleglycerol-phosphate dehydratase activity"/>
    <property type="evidence" value="ECO:0007669"/>
    <property type="project" value="UniProtKB-UniRule"/>
</dbReference>
<dbReference type="GO" id="GO:0046872">
    <property type="term" value="F:metal ion binding"/>
    <property type="evidence" value="ECO:0007669"/>
    <property type="project" value="UniProtKB-KW"/>
</dbReference>
<dbReference type="GO" id="GO:0000105">
    <property type="term" value="P:L-histidine biosynthetic process"/>
    <property type="evidence" value="ECO:0007669"/>
    <property type="project" value="UniProtKB-UniRule"/>
</dbReference>
<dbReference type="CDD" id="cd07503">
    <property type="entry name" value="HAD_HisB-N"/>
    <property type="match status" value="1"/>
</dbReference>
<dbReference type="CDD" id="cd07914">
    <property type="entry name" value="IGPD"/>
    <property type="match status" value="1"/>
</dbReference>
<dbReference type="FunFam" id="3.40.50.1000:FF:000061">
    <property type="entry name" value="Histidine biosynthesis bifunctional protein HisB"/>
    <property type="match status" value="1"/>
</dbReference>
<dbReference type="FunFam" id="3.30.230.40:FF:000001">
    <property type="entry name" value="Imidazoleglycerol-phosphate dehydratase HisB"/>
    <property type="match status" value="1"/>
</dbReference>
<dbReference type="FunFam" id="3.30.230.40:FF:000003">
    <property type="entry name" value="Imidazoleglycerol-phosphate dehydratase HisB"/>
    <property type="match status" value="1"/>
</dbReference>
<dbReference type="Gene3D" id="3.40.50.1000">
    <property type="entry name" value="HAD superfamily/HAD-like"/>
    <property type="match status" value="1"/>
</dbReference>
<dbReference type="Gene3D" id="3.30.230.40">
    <property type="entry name" value="Imidazole glycerol phosphate dehydratase, domain 1"/>
    <property type="match status" value="2"/>
</dbReference>
<dbReference type="HAMAP" id="MF_01022">
    <property type="entry name" value="Bifunc_HisB"/>
    <property type="match status" value="1"/>
</dbReference>
<dbReference type="HAMAP" id="MF_00076">
    <property type="entry name" value="HisB"/>
    <property type="match status" value="1"/>
</dbReference>
<dbReference type="InterPro" id="IPR036412">
    <property type="entry name" value="HAD-like_sf"/>
</dbReference>
<dbReference type="InterPro" id="IPR006549">
    <property type="entry name" value="HAD-SF_hydro_IIIA"/>
</dbReference>
<dbReference type="InterPro" id="IPR023214">
    <property type="entry name" value="HAD_sf"/>
</dbReference>
<dbReference type="InterPro" id="IPR020566">
    <property type="entry name" value="His_synth_bifunc_HisB"/>
</dbReference>
<dbReference type="InterPro" id="IPR005954">
    <property type="entry name" value="HisB_N"/>
</dbReference>
<dbReference type="InterPro" id="IPR006543">
    <property type="entry name" value="Histidinol-phos"/>
</dbReference>
<dbReference type="InterPro" id="IPR038494">
    <property type="entry name" value="IGPD_sf"/>
</dbReference>
<dbReference type="InterPro" id="IPR000807">
    <property type="entry name" value="ImidazoleglycerolP_deHydtase"/>
</dbReference>
<dbReference type="InterPro" id="IPR020565">
    <property type="entry name" value="ImidazoleglycerP_deHydtase_CS"/>
</dbReference>
<dbReference type="InterPro" id="IPR020568">
    <property type="entry name" value="Ribosomal_Su5_D2-typ_SF"/>
</dbReference>
<dbReference type="NCBIfam" id="TIGR01662">
    <property type="entry name" value="HAD-SF-IIIA"/>
    <property type="match status" value="1"/>
</dbReference>
<dbReference type="NCBIfam" id="TIGR01261">
    <property type="entry name" value="hisB_Nterm"/>
    <property type="match status" value="1"/>
</dbReference>
<dbReference type="NCBIfam" id="TIGR01656">
    <property type="entry name" value="Histidinol-ppas"/>
    <property type="match status" value="1"/>
</dbReference>
<dbReference type="NCBIfam" id="NF002111">
    <property type="entry name" value="PRK00951.2-1"/>
    <property type="match status" value="1"/>
</dbReference>
<dbReference type="NCBIfam" id="NF002114">
    <property type="entry name" value="PRK00951.2-4"/>
    <property type="match status" value="1"/>
</dbReference>
<dbReference type="NCBIfam" id="NF003937">
    <property type="entry name" value="PRK05446.1"/>
    <property type="match status" value="1"/>
</dbReference>
<dbReference type="PANTHER" id="PTHR23133:SF2">
    <property type="entry name" value="IMIDAZOLEGLYCEROL-PHOSPHATE DEHYDRATASE"/>
    <property type="match status" value="1"/>
</dbReference>
<dbReference type="PANTHER" id="PTHR23133">
    <property type="entry name" value="IMIDAZOLEGLYCEROL-PHOSPHATE DEHYDRATASE HIS7"/>
    <property type="match status" value="1"/>
</dbReference>
<dbReference type="Pfam" id="PF13242">
    <property type="entry name" value="Hydrolase_like"/>
    <property type="match status" value="1"/>
</dbReference>
<dbReference type="Pfam" id="PF00475">
    <property type="entry name" value="IGPD"/>
    <property type="match status" value="1"/>
</dbReference>
<dbReference type="SUPFAM" id="SSF56784">
    <property type="entry name" value="HAD-like"/>
    <property type="match status" value="1"/>
</dbReference>
<dbReference type="SUPFAM" id="SSF54211">
    <property type="entry name" value="Ribosomal protein S5 domain 2-like"/>
    <property type="match status" value="2"/>
</dbReference>
<dbReference type="PROSITE" id="PS00954">
    <property type="entry name" value="IGP_DEHYDRATASE_1"/>
    <property type="match status" value="1"/>
</dbReference>
<dbReference type="PROSITE" id="PS00955">
    <property type="entry name" value="IGP_DEHYDRATASE_2"/>
    <property type="match status" value="1"/>
</dbReference>
<name>HIS7_PECAS</name>
<protein>
    <recommendedName>
        <fullName evidence="1">Histidine biosynthesis bifunctional protein HisB</fullName>
    </recommendedName>
    <domain>
        <recommendedName>
            <fullName evidence="1">Histidinol-phosphatase</fullName>
            <ecNumber evidence="1">3.1.3.15</ecNumber>
        </recommendedName>
    </domain>
    <domain>
        <recommendedName>
            <fullName evidence="1">Imidazoleglycerol-phosphate dehydratase</fullName>
            <shortName evidence="1">IGPD</shortName>
            <ecNumber evidence="1">4.2.1.19</ecNumber>
        </recommendedName>
    </domain>
</protein>
<keyword id="KW-0028">Amino-acid biosynthesis</keyword>
<keyword id="KW-0963">Cytoplasm</keyword>
<keyword id="KW-0368">Histidine biosynthesis</keyword>
<keyword id="KW-0378">Hydrolase</keyword>
<keyword id="KW-0456">Lyase</keyword>
<keyword id="KW-0460">Magnesium</keyword>
<keyword id="KW-0479">Metal-binding</keyword>
<keyword id="KW-0511">Multifunctional enzyme</keyword>
<keyword id="KW-1185">Reference proteome</keyword>
<keyword id="KW-0862">Zinc</keyword>
<feature type="chain" id="PRO_0000158209" description="Histidine biosynthesis bifunctional protein HisB">
    <location>
        <begin position="1"/>
        <end position="355"/>
    </location>
</feature>
<feature type="region of interest" description="Histidinol-phosphatase" evidence="1">
    <location>
        <begin position="1"/>
        <end position="166"/>
    </location>
</feature>
<feature type="region of interest" description="Imidazoleglycerol-phosphate dehydratase" evidence="1">
    <location>
        <begin position="167"/>
        <end position="355"/>
    </location>
</feature>
<feature type="active site" description="Nucleophile" evidence="1">
    <location>
        <position position="9"/>
    </location>
</feature>
<feature type="active site" description="Proton donor" evidence="1">
    <location>
        <position position="11"/>
    </location>
</feature>
<feature type="binding site" evidence="1">
    <location>
        <position position="9"/>
    </location>
    <ligand>
        <name>Mg(2+)</name>
        <dbReference type="ChEBI" id="CHEBI:18420"/>
    </ligand>
</feature>
<feature type="binding site" evidence="1">
    <location>
        <position position="11"/>
    </location>
    <ligand>
        <name>Mg(2+)</name>
        <dbReference type="ChEBI" id="CHEBI:18420"/>
    </ligand>
</feature>
<feature type="binding site" evidence="1">
    <location>
        <position position="93"/>
    </location>
    <ligand>
        <name>Zn(2+)</name>
        <dbReference type="ChEBI" id="CHEBI:29105"/>
    </ligand>
</feature>
<feature type="binding site" evidence="1">
    <location>
        <position position="95"/>
    </location>
    <ligand>
        <name>Zn(2+)</name>
        <dbReference type="ChEBI" id="CHEBI:29105"/>
    </ligand>
</feature>
<feature type="binding site" evidence="1">
    <location>
        <position position="101"/>
    </location>
    <ligand>
        <name>Zn(2+)</name>
        <dbReference type="ChEBI" id="CHEBI:29105"/>
    </ligand>
</feature>
<feature type="binding site" evidence="1">
    <location>
        <position position="103"/>
    </location>
    <ligand>
        <name>Zn(2+)</name>
        <dbReference type="ChEBI" id="CHEBI:29105"/>
    </ligand>
</feature>
<feature type="binding site" evidence="1">
    <location>
        <position position="130"/>
    </location>
    <ligand>
        <name>Mg(2+)</name>
        <dbReference type="ChEBI" id="CHEBI:18420"/>
    </ligand>
</feature>
<gene>
    <name evidence="1" type="primary">hisB</name>
    <name type="ordered locus">ECA2585</name>
</gene>
<reference key="1">
    <citation type="journal article" date="2004" name="Proc. Natl. Acad. Sci. U.S.A.">
        <title>Genome sequence of the enterobacterial phytopathogen Erwinia carotovora subsp. atroseptica and characterization of virulence factors.</title>
        <authorList>
            <person name="Bell K.S."/>
            <person name="Sebaihia M."/>
            <person name="Pritchard L."/>
            <person name="Holden M.T.G."/>
            <person name="Hyman L.J."/>
            <person name="Holeva M.C."/>
            <person name="Thomson N.R."/>
            <person name="Bentley S.D."/>
            <person name="Churcher L.J.C."/>
            <person name="Mungall K."/>
            <person name="Atkin R."/>
            <person name="Bason N."/>
            <person name="Brooks K."/>
            <person name="Chillingworth T."/>
            <person name="Clark K."/>
            <person name="Doggett J."/>
            <person name="Fraser A."/>
            <person name="Hance Z."/>
            <person name="Hauser H."/>
            <person name="Jagels K."/>
            <person name="Moule S."/>
            <person name="Norbertczak H."/>
            <person name="Ormond D."/>
            <person name="Price C."/>
            <person name="Quail M.A."/>
            <person name="Sanders M."/>
            <person name="Walker D."/>
            <person name="Whitehead S."/>
            <person name="Salmond G.P.C."/>
            <person name="Birch P.R.J."/>
            <person name="Parkhill J."/>
            <person name="Toth I.K."/>
        </authorList>
    </citation>
    <scope>NUCLEOTIDE SEQUENCE [LARGE SCALE GENOMIC DNA]</scope>
    <source>
        <strain>SCRI 1043 / ATCC BAA-672</strain>
    </source>
</reference>
<evidence type="ECO:0000255" key="1">
    <source>
        <dbReference type="HAMAP-Rule" id="MF_01022"/>
    </source>
</evidence>
<sequence>MGQKYLFIDRDGTLIAEPPEDFQVDRLDKLALEPDVIPSLLALQKAGYTLVMITNQDGLGTDSFPQETFDPPHNLMMQILTSQGIHFEHVLICPHLPADNCTCRKPKTELVTAYLNGGLMDVANSYVIGDRQTDIQLAQNMGITGLLYQRGGLNWQAITDQLTKRNRHAHVNRVTRETAIDVNVWLDQEGGSKINTGVGFFDHMLDQIATHGGFRMNIEVKGDLYIDDHHTVEDTGLALGEALNNALGDKRGIGRFGFILPMDECLARCALDISGRPHLEYKAEFNYQRVGDLSTEMVEHFFRSLSYSMACTLHLKTKGRNDHHRVESLFKVFGRTLRQAIRVEGDTLPSSKGVL</sequence>
<organism>
    <name type="scientific">Pectobacterium atrosepticum (strain SCRI 1043 / ATCC BAA-672)</name>
    <name type="common">Erwinia carotovora subsp. atroseptica</name>
    <dbReference type="NCBI Taxonomy" id="218491"/>
    <lineage>
        <taxon>Bacteria</taxon>
        <taxon>Pseudomonadati</taxon>
        <taxon>Pseudomonadota</taxon>
        <taxon>Gammaproteobacteria</taxon>
        <taxon>Enterobacterales</taxon>
        <taxon>Pectobacteriaceae</taxon>
        <taxon>Pectobacterium</taxon>
    </lineage>
</organism>
<accession>Q6D409</accession>
<comment type="catalytic activity">
    <reaction evidence="1">
        <text>D-erythro-1-(imidazol-4-yl)glycerol 3-phosphate = 3-(imidazol-4-yl)-2-oxopropyl phosphate + H2O</text>
        <dbReference type="Rhea" id="RHEA:11040"/>
        <dbReference type="ChEBI" id="CHEBI:15377"/>
        <dbReference type="ChEBI" id="CHEBI:57766"/>
        <dbReference type="ChEBI" id="CHEBI:58278"/>
        <dbReference type="EC" id="4.2.1.19"/>
    </reaction>
</comment>
<comment type="catalytic activity">
    <reaction evidence="1">
        <text>L-histidinol phosphate + H2O = L-histidinol + phosphate</text>
        <dbReference type="Rhea" id="RHEA:14465"/>
        <dbReference type="ChEBI" id="CHEBI:15377"/>
        <dbReference type="ChEBI" id="CHEBI:43474"/>
        <dbReference type="ChEBI" id="CHEBI:57699"/>
        <dbReference type="ChEBI" id="CHEBI:57980"/>
        <dbReference type="EC" id="3.1.3.15"/>
    </reaction>
</comment>
<comment type="cofactor">
    <cofactor evidence="1">
        <name>Mg(2+)</name>
        <dbReference type="ChEBI" id="CHEBI:18420"/>
    </cofactor>
</comment>
<comment type="cofactor">
    <cofactor evidence="1">
        <name>Zn(2+)</name>
        <dbReference type="ChEBI" id="CHEBI:29105"/>
    </cofactor>
</comment>
<comment type="pathway">
    <text evidence="1">Amino-acid biosynthesis; L-histidine biosynthesis; L-histidine from 5-phospho-alpha-D-ribose 1-diphosphate: step 6/9.</text>
</comment>
<comment type="pathway">
    <text evidence="1">Amino-acid biosynthesis; L-histidine biosynthesis; L-histidine from 5-phospho-alpha-D-ribose 1-diphosphate: step 8/9.</text>
</comment>
<comment type="subcellular location">
    <subcellularLocation>
        <location evidence="1">Cytoplasm</location>
    </subcellularLocation>
</comment>
<comment type="similarity">
    <text evidence="1">In the N-terminal section; belongs to the histidinol-phosphatase family.</text>
</comment>
<comment type="similarity">
    <text evidence="1">In the C-terminal section; belongs to the imidazoleglycerol-phosphate dehydratase family.</text>
</comment>
<proteinExistence type="inferred from homology"/>